<accession>Q2YHT7</accession>
<accession>Q2YHT6</accession>
<name>MOR1A_CHICK</name>
<gene>
    <name type="primary">CD200R1A</name>
</gene>
<dbReference type="EMBL" id="AM076728">
    <property type="protein sequence ID" value="CAJ28370.1"/>
    <property type="molecule type" value="mRNA"/>
</dbReference>
<dbReference type="EMBL" id="AM076729">
    <property type="protein sequence ID" value="CAJ28371.1"/>
    <property type="molecule type" value="mRNA"/>
</dbReference>
<dbReference type="RefSeq" id="NP_001072952.1">
    <property type="nucleotide sequence ID" value="NM_001079484.1"/>
</dbReference>
<dbReference type="SMR" id="Q2YHT7"/>
<dbReference type="FunCoup" id="Q2YHT7">
    <property type="interactions" value="186"/>
</dbReference>
<dbReference type="STRING" id="9031.ENSGALP00000029812"/>
<dbReference type="GlyCosmos" id="Q2YHT7">
    <property type="glycosylation" value="6 sites, No reported glycans"/>
</dbReference>
<dbReference type="GlyGen" id="Q2YHT7">
    <property type="glycosylation" value="6 sites"/>
</dbReference>
<dbReference type="PaxDb" id="9031-ENSGALP00000029812"/>
<dbReference type="GeneID" id="768673"/>
<dbReference type="KEGG" id="gga:768673"/>
<dbReference type="CTD" id="768673"/>
<dbReference type="VEuPathDB" id="HostDB:geneid_768673"/>
<dbReference type="eggNOG" id="ENOG502SPS1">
    <property type="taxonomic scope" value="Eukaryota"/>
</dbReference>
<dbReference type="HOGENOM" id="CLU_069156_0_1_1"/>
<dbReference type="InParanoid" id="Q2YHT7"/>
<dbReference type="OrthoDB" id="8915654at2759"/>
<dbReference type="PhylomeDB" id="Q2YHT7"/>
<dbReference type="TreeFam" id="TF335960"/>
<dbReference type="Reactome" id="R-GGA-198933">
    <property type="pathway name" value="Immunoregulatory interactions between a Lymphoid and a non-Lymphoid cell"/>
</dbReference>
<dbReference type="PRO" id="PR:Q2YHT7"/>
<dbReference type="Proteomes" id="UP000000539">
    <property type="component" value="Chromosome 1"/>
</dbReference>
<dbReference type="Bgee" id="ENSGALG00000019231">
    <property type="expression patterns" value="Expressed in spleen and 13 other cell types or tissues"/>
</dbReference>
<dbReference type="GO" id="GO:0009897">
    <property type="term" value="C:external side of plasma membrane"/>
    <property type="evidence" value="ECO:0000318"/>
    <property type="project" value="GO_Central"/>
</dbReference>
<dbReference type="GO" id="GO:0005576">
    <property type="term" value="C:extracellular region"/>
    <property type="evidence" value="ECO:0007669"/>
    <property type="project" value="UniProtKB-SubCell"/>
</dbReference>
<dbReference type="GO" id="GO:0038023">
    <property type="term" value="F:signaling receptor activity"/>
    <property type="evidence" value="ECO:0000318"/>
    <property type="project" value="GO_Central"/>
</dbReference>
<dbReference type="GO" id="GO:0150077">
    <property type="term" value="P:regulation of neuroinflammatory response"/>
    <property type="evidence" value="ECO:0007669"/>
    <property type="project" value="InterPro"/>
</dbReference>
<dbReference type="FunFam" id="2.60.40.10:FF:002547">
    <property type="entry name" value="Cell surface glycoprotein CD200 receptor 1-A"/>
    <property type="match status" value="1"/>
</dbReference>
<dbReference type="FunFam" id="2.60.40.10:FF:003231">
    <property type="entry name" value="Cell surface glycoprotein CD200 receptor 1-A"/>
    <property type="match status" value="1"/>
</dbReference>
<dbReference type="Gene3D" id="2.60.40.10">
    <property type="entry name" value="Immunoglobulins"/>
    <property type="match status" value="2"/>
</dbReference>
<dbReference type="InterPro" id="IPR040012">
    <property type="entry name" value="CD200R"/>
</dbReference>
<dbReference type="InterPro" id="IPR007110">
    <property type="entry name" value="Ig-like_dom"/>
</dbReference>
<dbReference type="InterPro" id="IPR036179">
    <property type="entry name" value="Ig-like_dom_sf"/>
</dbReference>
<dbReference type="InterPro" id="IPR013783">
    <property type="entry name" value="Ig-like_fold"/>
</dbReference>
<dbReference type="InterPro" id="IPR003599">
    <property type="entry name" value="Ig_sub"/>
</dbReference>
<dbReference type="InterPro" id="IPR003598">
    <property type="entry name" value="Ig_sub2"/>
</dbReference>
<dbReference type="InterPro" id="IPR013106">
    <property type="entry name" value="Ig_V-set"/>
</dbReference>
<dbReference type="PANTHER" id="PTHR21462:SF2">
    <property type="entry name" value="CELL SURFACE GLYCOPROTEIN CD200 RECEPTOR 2"/>
    <property type="match status" value="1"/>
</dbReference>
<dbReference type="PANTHER" id="PTHR21462">
    <property type="entry name" value="CELL SURFACE GLYCOPROTEIN OX2 RECEPTOR PRECURSOR"/>
    <property type="match status" value="1"/>
</dbReference>
<dbReference type="Pfam" id="PF07686">
    <property type="entry name" value="V-set"/>
    <property type="match status" value="1"/>
</dbReference>
<dbReference type="SMART" id="SM00409">
    <property type="entry name" value="IG"/>
    <property type="match status" value="1"/>
</dbReference>
<dbReference type="SMART" id="SM00408">
    <property type="entry name" value="IGc2"/>
    <property type="match status" value="1"/>
</dbReference>
<dbReference type="SUPFAM" id="SSF48726">
    <property type="entry name" value="Immunoglobulin"/>
    <property type="match status" value="1"/>
</dbReference>
<dbReference type="PROSITE" id="PS50835">
    <property type="entry name" value="IG_LIKE"/>
    <property type="match status" value="2"/>
</dbReference>
<evidence type="ECO:0000255" key="1"/>
<evidence type="ECO:0000255" key="2">
    <source>
        <dbReference type="PROSITE-ProRule" id="PRU00114"/>
    </source>
</evidence>
<evidence type="ECO:0000269" key="3">
    <source>
    </source>
</evidence>
<evidence type="ECO:0000303" key="4">
    <source>
    </source>
</evidence>
<evidence type="ECO:0000305" key="5"/>
<proteinExistence type="evidence at protein level"/>
<organism>
    <name type="scientific">Gallus gallus</name>
    <name type="common">Chicken</name>
    <dbReference type="NCBI Taxonomy" id="9031"/>
    <lineage>
        <taxon>Eukaryota</taxon>
        <taxon>Metazoa</taxon>
        <taxon>Chordata</taxon>
        <taxon>Craniata</taxon>
        <taxon>Vertebrata</taxon>
        <taxon>Euteleostomi</taxon>
        <taxon>Archelosauria</taxon>
        <taxon>Archosauria</taxon>
        <taxon>Dinosauria</taxon>
        <taxon>Saurischia</taxon>
        <taxon>Theropoda</taxon>
        <taxon>Coelurosauria</taxon>
        <taxon>Aves</taxon>
        <taxon>Neognathae</taxon>
        <taxon>Galloanserae</taxon>
        <taxon>Galliformes</taxon>
        <taxon>Phasianidae</taxon>
        <taxon>Phasianinae</taxon>
        <taxon>Gallus</taxon>
    </lineage>
</organism>
<protein>
    <recommendedName>
        <fullName>Cell surface glycoprotein CD200 receptor 1-A</fullName>
    </recommendedName>
    <alternativeName>
        <fullName>CD200 cell surface glycoprotein receptor 1-A</fullName>
    </alternativeName>
    <alternativeName>
        <fullName>Cell surface glycoprotein OX2 receptor 1-A</fullName>
    </alternativeName>
</protein>
<feature type="signal peptide" evidence="1">
    <location>
        <begin position="1"/>
        <end position="24"/>
    </location>
</feature>
<feature type="chain" id="PRO_0000346450" description="Cell surface glycoprotein CD200 receptor 1-A">
    <location>
        <begin position="25"/>
        <end position="300"/>
    </location>
</feature>
<feature type="topological domain" description="Extracellular" evidence="1">
    <location>
        <begin position="25"/>
        <end position="213"/>
    </location>
</feature>
<feature type="transmembrane region" description="Helical" evidence="1">
    <location>
        <begin position="214"/>
        <end position="234"/>
    </location>
</feature>
<feature type="topological domain" description="Cytoplasmic" evidence="1">
    <location>
        <begin position="235"/>
        <end position="300"/>
    </location>
</feature>
<feature type="domain" description="Ig-like V-type">
    <location>
        <begin position="25"/>
        <end position="124"/>
    </location>
</feature>
<feature type="domain" description="Ig-like C2-type">
    <location>
        <begin position="122"/>
        <end position="206"/>
    </location>
</feature>
<feature type="glycosylation site" description="N-linked (GlcNAc...) asparagine" evidence="1">
    <location>
        <position position="45"/>
    </location>
</feature>
<feature type="glycosylation site" description="N-linked (GlcNAc...) asparagine" evidence="1">
    <location>
        <position position="76"/>
    </location>
</feature>
<feature type="glycosylation site" description="N-linked (GlcNAc...) asparagine" evidence="1">
    <location>
        <position position="105"/>
    </location>
</feature>
<feature type="glycosylation site" description="N-linked (GlcNAc...) asparagine" evidence="1">
    <location>
        <position position="171"/>
    </location>
</feature>
<feature type="glycosylation site" description="N-linked (GlcNAc...) asparagine" evidence="1">
    <location>
        <position position="200"/>
    </location>
</feature>
<feature type="glycosylation site" description="N-linked (GlcNAc...) asparagine" evidence="1">
    <location>
        <position position="206"/>
    </location>
</feature>
<feature type="disulfide bond" evidence="2">
    <location>
        <begin position="40"/>
        <end position="108"/>
    </location>
</feature>
<feature type="disulfide bond" evidence="2">
    <location>
        <begin position="143"/>
        <end position="192"/>
    </location>
</feature>
<feature type="splice variant" id="VSP_035000" description="In isoform 2." evidence="4">
    <original>SYRDLILCIAIILSFLIIITFMAVIYYLKLHGCRF</original>
    <variation>YSVTEANLLILFLHIPHRMTQWRWNPILLTCRRKM</variation>
    <location>
        <begin position="210"/>
        <end position="244"/>
    </location>
</feature>
<feature type="splice variant" id="VSP_035001" description="In isoform 2." evidence="4">
    <location>
        <begin position="245"/>
        <end position="300"/>
    </location>
</feature>
<keyword id="KW-0025">Alternative splicing</keyword>
<keyword id="KW-1015">Disulfide bond</keyword>
<keyword id="KW-0325">Glycoprotein</keyword>
<keyword id="KW-0393">Immunoglobulin domain</keyword>
<keyword id="KW-0472">Membrane</keyword>
<keyword id="KW-0597">Phosphoprotein</keyword>
<keyword id="KW-0675">Receptor</keyword>
<keyword id="KW-1185">Reference proteome</keyword>
<keyword id="KW-0677">Repeat</keyword>
<keyword id="KW-0964">Secreted</keyword>
<keyword id="KW-0732">Signal</keyword>
<keyword id="KW-0812">Transmembrane</keyword>
<keyword id="KW-1133">Transmembrane helix</keyword>
<sequence>MEIAGKAVCVFLLLAIIKLRRSEGINRVSANLGHNTVMTCPTRTNISMVTWKINPKTGHQCTLAYRIDKDSTGKTNCSDRINWRSRPDWDQALEIQQVGKADEGNYTCEVVNADGNFHRLYHLTVIVAPRMALYCDDYGNPVCEAETEKSAAEISWVPESNSTPRADSHDNGTVTVVSWFAARSTNGKNPTCIVSHATLNETKSINCSSSYRDLILCIAIILSFLIIITFMAVIYYLKLHGCRFCHRSKPPDIIPTYSSQDDTVEVEPYTTYVQKENVIYNSVSDLTLRQNLPQGQSPAT</sequence>
<reference key="1">
    <citation type="journal article" date="2008" name="Mol. Immunol.">
        <title>Characterization of the chicken CD200 receptor family.</title>
        <authorList>
            <person name="Viertlboeck B.C."/>
            <person name="Hanczaruk M.A."/>
            <person name="Schmitt F.C."/>
            <person name="Schmitt R."/>
            <person name="Goebel T.W."/>
        </authorList>
    </citation>
    <scope>NUCLEOTIDE SEQUENCE [MRNA] (ISOFORMS 1 AND 2)</scope>
    <scope>PHOSPHORYLATION</scope>
    <scope>GLYCOSYLATION</scope>
    <scope>TISSUE SPECIFICITY</scope>
    <source>
        <strain>M11</strain>
    </source>
</reference>
<comment type="subcellular location">
    <molecule>Isoform 1</molecule>
    <subcellularLocation>
        <location evidence="5">Membrane</location>
        <topology evidence="5">Single-pass type I membrane protein</topology>
    </subcellularLocation>
</comment>
<comment type="subcellular location">
    <molecule>Isoform 2</molecule>
    <subcellularLocation>
        <location evidence="5">Secreted</location>
    </subcellularLocation>
</comment>
<comment type="alternative products">
    <event type="alternative splicing"/>
    <isoform>
        <id>Q2YHT7-1</id>
        <name>1</name>
        <name>ggCD200R-B1</name>
        <sequence type="displayed"/>
    </isoform>
    <isoform>
        <id>Q2YHT7-2</id>
        <name>2</name>
        <name>ggCD200R-B1sv</name>
        <sequence type="described" ref="VSP_035000 VSP_035001"/>
    </isoform>
</comment>
<comment type="tissue specificity">
    <text evidence="3">Highly expressed in macrophages, peripheral blood lymphocytes (PBL) and peripheral blood mononuclear cells (PBMC). Weakly expressed in bursa, thymus, spleen, liver and brain.</text>
</comment>
<comment type="PTM">
    <text evidence="3">Glycosylated.</text>
</comment>
<comment type="PTM">
    <text evidence="3">Phosphorylated.</text>
</comment>
<comment type="similarity">
    <text evidence="5">Belongs to the CD200R family.</text>
</comment>